<keyword id="KW-0418">Kinase</keyword>
<keyword id="KW-0547">Nucleotide-binding</keyword>
<keyword id="KW-1185">Reference proteome</keyword>
<keyword id="KW-0723">Serine/threonine-protein kinase</keyword>
<keyword id="KW-0808">Transferase</keyword>
<reference key="1">
    <citation type="submission" date="2006-01" db="EMBL/GenBank/DDBJ databases">
        <title>Complete sequence of Rhodopseudomonas palustris HaA2.</title>
        <authorList>
            <consortium name="US DOE Joint Genome Institute"/>
            <person name="Copeland A."/>
            <person name="Lucas S."/>
            <person name="Lapidus A."/>
            <person name="Barry K."/>
            <person name="Detter J.C."/>
            <person name="Glavina T."/>
            <person name="Hammon N."/>
            <person name="Israni S."/>
            <person name="Pitluck S."/>
            <person name="Chain P."/>
            <person name="Malfatti S."/>
            <person name="Shin M."/>
            <person name="Vergez L."/>
            <person name="Schmutz J."/>
            <person name="Larimer F."/>
            <person name="Land M."/>
            <person name="Hauser L."/>
            <person name="Pelletier D.A."/>
            <person name="Kyrpides N."/>
            <person name="Anderson I."/>
            <person name="Oda Y."/>
            <person name="Harwood C.S."/>
            <person name="Richardson P."/>
        </authorList>
    </citation>
    <scope>NUCLEOTIDE SEQUENCE [LARGE SCALE GENOMIC DNA]</scope>
    <source>
        <strain>HaA2</strain>
    </source>
</reference>
<accession>Q2J354</accession>
<comment type="function">
    <text evidence="1">Bifunctional serine/threonine kinase and phosphorylase involved in the regulation of the pyruvate, phosphate dikinase (PPDK) by catalyzing its phosphorylation/dephosphorylation.</text>
</comment>
<comment type="catalytic activity">
    <reaction evidence="1">
        <text>N(tele)-phospho-L-histidyl/L-threonyl-[pyruvate, phosphate dikinase] + ADP = N(tele)-phospho-L-histidyl/O-phospho-L-threonyl-[pyruvate, phosphate dikinase] + AMP + H(+)</text>
        <dbReference type="Rhea" id="RHEA:43692"/>
        <dbReference type="Rhea" id="RHEA-COMP:10650"/>
        <dbReference type="Rhea" id="RHEA-COMP:10651"/>
        <dbReference type="ChEBI" id="CHEBI:15378"/>
        <dbReference type="ChEBI" id="CHEBI:30013"/>
        <dbReference type="ChEBI" id="CHEBI:61977"/>
        <dbReference type="ChEBI" id="CHEBI:83586"/>
        <dbReference type="ChEBI" id="CHEBI:456215"/>
        <dbReference type="ChEBI" id="CHEBI:456216"/>
        <dbReference type="EC" id="2.7.11.32"/>
    </reaction>
</comment>
<comment type="catalytic activity">
    <reaction evidence="1">
        <text>N(tele)-phospho-L-histidyl/O-phospho-L-threonyl-[pyruvate, phosphate dikinase] + phosphate + H(+) = N(tele)-phospho-L-histidyl/L-threonyl-[pyruvate, phosphate dikinase] + diphosphate</text>
        <dbReference type="Rhea" id="RHEA:43696"/>
        <dbReference type="Rhea" id="RHEA-COMP:10650"/>
        <dbReference type="Rhea" id="RHEA-COMP:10651"/>
        <dbReference type="ChEBI" id="CHEBI:15378"/>
        <dbReference type="ChEBI" id="CHEBI:30013"/>
        <dbReference type="ChEBI" id="CHEBI:33019"/>
        <dbReference type="ChEBI" id="CHEBI:43474"/>
        <dbReference type="ChEBI" id="CHEBI:61977"/>
        <dbReference type="ChEBI" id="CHEBI:83586"/>
        <dbReference type="EC" id="2.7.4.27"/>
    </reaction>
</comment>
<comment type="similarity">
    <text evidence="1">Belongs to the pyruvate, phosphate/water dikinase regulatory protein family. PDRP subfamily.</text>
</comment>
<feature type="chain" id="PRO_0000316728" description="Putative pyruvate, phosphate dikinase regulatory protein">
    <location>
        <begin position="1"/>
        <end position="279"/>
    </location>
</feature>
<feature type="binding site" evidence="1">
    <location>
        <begin position="153"/>
        <end position="160"/>
    </location>
    <ligand>
        <name>ADP</name>
        <dbReference type="ChEBI" id="CHEBI:456216"/>
    </ligand>
</feature>
<gene>
    <name type="ordered locus">RPB_0395</name>
</gene>
<dbReference type="EC" id="2.7.11.32" evidence="1"/>
<dbReference type="EC" id="2.7.4.27" evidence="1"/>
<dbReference type="EMBL" id="CP000250">
    <property type="protein sequence ID" value="ABD05106.1"/>
    <property type="molecule type" value="Genomic_DNA"/>
</dbReference>
<dbReference type="RefSeq" id="WP_011439296.1">
    <property type="nucleotide sequence ID" value="NC_007778.1"/>
</dbReference>
<dbReference type="SMR" id="Q2J354"/>
<dbReference type="STRING" id="316058.RPB_0395"/>
<dbReference type="KEGG" id="rpb:RPB_0395"/>
<dbReference type="eggNOG" id="COG1806">
    <property type="taxonomic scope" value="Bacteria"/>
</dbReference>
<dbReference type="HOGENOM" id="CLU_046206_2_0_5"/>
<dbReference type="OrthoDB" id="9782201at2"/>
<dbReference type="Proteomes" id="UP000008809">
    <property type="component" value="Chromosome"/>
</dbReference>
<dbReference type="GO" id="GO:0043531">
    <property type="term" value="F:ADP binding"/>
    <property type="evidence" value="ECO:0007669"/>
    <property type="project" value="UniProtKB-UniRule"/>
</dbReference>
<dbReference type="GO" id="GO:0005524">
    <property type="term" value="F:ATP binding"/>
    <property type="evidence" value="ECO:0007669"/>
    <property type="project" value="InterPro"/>
</dbReference>
<dbReference type="GO" id="GO:0016776">
    <property type="term" value="F:phosphotransferase activity, phosphate group as acceptor"/>
    <property type="evidence" value="ECO:0007669"/>
    <property type="project" value="UniProtKB-UniRule"/>
</dbReference>
<dbReference type="GO" id="GO:0004674">
    <property type="term" value="F:protein serine/threonine kinase activity"/>
    <property type="evidence" value="ECO:0007669"/>
    <property type="project" value="UniProtKB-UniRule"/>
</dbReference>
<dbReference type="HAMAP" id="MF_00921">
    <property type="entry name" value="PDRP"/>
    <property type="match status" value="1"/>
</dbReference>
<dbReference type="InterPro" id="IPR005177">
    <property type="entry name" value="Kinase-pyrophosphorylase"/>
</dbReference>
<dbReference type="InterPro" id="IPR026565">
    <property type="entry name" value="PPDK_reg"/>
</dbReference>
<dbReference type="NCBIfam" id="NF003742">
    <property type="entry name" value="PRK05339.1"/>
    <property type="match status" value="1"/>
</dbReference>
<dbReference type="PANTHER" id="PTHR31756">
    <property type="entry name" value="PYRUVATE, PHOSPHATE DIKINASE REGULATORY PROTEIN 1, CHLOROPLASTIC"/>
    <property type="match status" value="1"/>
</dbReference>
<dbReference type="PANTHER" id="PTHR31756:SF3">
    <property type="entry name" value="PYRUVATE, PHOSPHATE DIKINASE REGULATORY PROTEIN 1, CHLOROPLASTIC"/>
    <property type="match status" value="1"/>
</dbReference>
<dbReference type="Pfam" id="PF03618">
    <property type="entry name" value="Kinase-PPPase"/>
    <property type="match status" value="1"/>
</dbReference>
<evidence type="ECO:0000255" key="1">
    <source>
        <dbReference type="HAMAP-Rule" id="MF_00921"/>
    </source>
</evidence>
<protein>
    <recommendedName>
        <fullName evidence="1">Putative pyruvate, phosphate dikinase regulatory protein</fullName>
        <shortName evidence="1">PPDK regulatory protein</shortName>
        <ecNumber evidence="1">2.7.11.32</ecNumber>
        <ecNumber evidence="1">2.7.4.27</ecNumber>
    </recommendedName>
</protein>
<proteinExistence type="inferred from homology"/>
<organism>
    <name type="scientific">Rhodopseudomonas palustris (strain HaA2)</name>
    <dbReference type="NCBI Taxonomy" id="316058"/>
    <lineage>
        <taxon>Bacteria</taxon>
        <taxon>Pseudomonadati</taxon>
        <taxon>Pseudomonadota</taxon>
        <taxon>Alphaproteobacteria</taxon>
        <taxon>Hyphomicrobiales</taxon>
        <taxon>Nitrobacteraceae</taxon>
        <taxon>Rhodopseudomonas</taxon>
    </lineage>
</organism>
<name>PDRP_RHOP2</name>
<sequence>MLTDGSYFHLHLVSDSTGETLITVSRAVAAQYANVNAVEHVYPLVRSQKQLDRVLQEIEESPGIVLFTLLEGELVARLEAKCQEINSPSLSIIGPVMQLFEAYLGASTTGRVGAQHTLNAEYFKRIDALNYSMMHDDGQHVEGLEEADVVLVGVSRTSKTPTSIYLANRGIRTANVPLVAGIPIPHQLETLKKPLVVSLHASPERLIQVRQNRLLSLGAGAGNDSYIDRQSVTDEVLLARKLSAKYGWSLLDVTRRSIEETAAAIMKLLADRQRQRMSE</sequence>